<organism>
    <name type="scientific">Infectious hematopoietic necrosis virus (strain Round Butte)</name>
    <name type="common">IHNV</name>
    <dbReference type="NCBI Taxonomy" id="11291"/>
    <lineage>
        <taxon>Viruses</taxon>
        <taxon>Riboviria</taxon>
        <taxon>Orthornavirae</taxon>
        <taxon>Negarnaviricota</taxon>
        <taxon>Haploviricotina</taxon>
        <taxon>Monjiviricetes</taxon>
        <taxon>Mononegavirales</taxon>
        <taxon>Rhabdoviridae</taxon>
        <taxon>Gammarhabdovirinae</taxon>
        <taxon>Novirhabdovirus</taxon>
        <taxon>Novirhabdovirus salmonid</taxon>
    </lineage>
</organism>
<reference key="1">
    <citation type="journal article" date="1988" name="Virology">
        <title>The nucleocapsid gene of infectious hematopoietic necrosis virus, a fish rhabdovirus.</title>
        <authorList>
            <person name="Gilmore R.D. Jr."/>
            <person name="Leong J.-A."/>
        </authorList>
    </citation>
    <scope>NUCLEOTIDE SEQUENCE [GENOMIC RNA]</scope>
</reference>
<accession>P19691</accession>
<sequence length="391" mass="42137">MTSALRETFTGLRDIKGGVLEDPETEYRPGTITLPLFFSKADFDLEMIKRAVSHVGGEGTRRALGLLCAFVIAETVPSGRGTVAELLEALGFLLESLETGAPLEVTFADPNNKLAETIVKENVLEVVTGLLFTCALLTKYDVDKMATYCQNKLERLATSQGIGELVNFNANRGVLARIGAVLRPGQKLTKAIYGIILINLSDPATAARAKALCAMRLSGTGMTMVGLFNQAAKNLGALPADLLEDLCMKSVVESARRIVRLMRIVAEAPGVAAKYGVMMSRMLGVGYFKAYGINENARITCILMNINDRYDDGTSGGLTGLKVSDPFRKLAREIARLLVLKYDGDGSTGEGASDLIRRAEMASRGPDMGEEEEEDEEDDDSSEPGDSDSFL</sequence>
<dbReference type="EMBL" id="J04321">
    <property type="protein sequence ID" value="AAA46240.1"/>
    <property type="status" value="ALT_FRAME"/>
    <property type="molecule type" value="Genomic_RNA"/>
</dbReference>
<dbReference type="PIR" id="A31834">
    <property type="entry name" value="VHVNIH"/>
</dbReference>
<dbReference type="GO" id="GO:0019029">
    <property type="term" value="C:helical viral capsid"/>
    <property type="evidence" value="ECO:0007669"/>
    <property type="project" value="UniProtKB-KW"/>
</dbReference>
<dbReference type="GO" id="GO:0030430">
    <property type="term" value="C:host cell cytoplasm"/>
    <property type="evidence" value="ECO:0007669"/>
    <property type="project" value="UniProtKB-SubCell"/>
</dbReference>
<dbReference type="GO" id="GO:1990904">
    <property type="term" value="C:ribonucleoprotein complex"/>
    <property type="evidence" value="ECO:0007669"/>
    <property type="project" value="UniProtKB-KW"/>
</dbReference>
<dbReference type="GO" id="GO:0019013">
    <property type="term" value="C:viral nucleocapsid"/>
    <property type="evidence" value="ECO:0007669"/>
    <property type="project" value="UniProtKB-KW"/>
</dbReference>
<dbReference type="GO" id="GO:0003723">
    <property type="term" value="F:RNA binding"/>
    <property type="evidence" value="ECO:0007669"/>
    <property type="project" value="UniProtKB-KW"/>
</dbReference>
<dbReference type="InterPro" id="IPR004902">
    <property type="entry name" value="Rhabdo_ncap_2"/>
</dbReference>
<dbReference type="Pfam" id="PF03216">
    <property type="entry name" value="Rhabdo_ncap_2"/>
    <property type="match status" value="1"/>
</dbReference>
<protein>
    <recommendedName>
        <fullName>Nucleoprotein</fullName>
        <shortName>NP</shortName>
    </recommendedName>
    <alternativeName>
        <fullName>Nucleocapsid protein</fullName>
        <shortName>Protein N</shortName>
    </alternativeName>
</protein>
<keyword id="KW-0167">Capsid protein</keyword>
<keyword id="KW-1139">Helical capsid protein</keyword>
<keyword id="KW-1035">Host cytoplasm</keyword>
<keyword id="KW-0597">Phosphoprotein</keyword>
<keyword id="KW-0687">Ribonucleoprotein</keyword>
<keyword id="KW-0694">RNA-binding</keyword>
<keyword id="KW-0543">Viral nucleoprotein</keyword>
<keyword id="KW-0946">Virion</keyword>
<proteinExistence type="inferred from homology"/>
<comment type="function">
    <text evidence="1">Encapsidates the genome, protecting it from nucleases. If expressed without protein P it binds non-specifically RNA and therefore can bind it's own mRNA. Interaction with protein P abolishes any non-specific RNA binding, and prevents phosphorylation. The soluble N-P complex encapsidates specifically the genomic RNA, with protein N protecting the genome like a pearl necklace. The encapsidated genomic RNA is termed the nucleocapsid (NC) and serves as template for viral transcription and replication. Protein N binds protein P in the NC through a different interaction, and can be phosphorylated. Subsequent viral replication is dependent on intracellular concentration of newly synthesized protein N. During replication, encapsidation by protein N is coupled to RNA synthesis and all replicative products are resistant to nucleases (By similarity).</text>
</comment>
<comment type="subunit">
    <text evidence="1">Homomultimerizes to form the nucleocapsid. Binds to viral genomic RNA (By similarity).</text>
</comment>
<comment type="subcellular location">
    <subcellularLocation>
        <location>Virion</location>
    </subcellularLocation>
    <subcellularLocation>
        <location evidence="1">Host cytoplasm</location>
    </subcellularLocation>
</comment>
<comment type="similarity">
    <text evidence="3">Belongs to the novirhabdovirus nucleocapsid protein family.</text>
</comment>
<comment type="sequence caution" evidence="3">
    <conflict type="frameshift">
        <sequence resource="EMBL-CDS" id="AAA46240"/>
    </conflict>
</comment>
<name>NCAP_IHNVR</name>
<organismHost>
    <name type="scientific">Salmo</name>
    <dbReference type="NCBI Taxonomy" id="8028"/>
</organismHost>
<evidence type="ECO:0000250" key="1"/>
<evidence type="ECO:0000256" key="2">
    <source>
        <dbReference type="SAM" id="MobiDB-lite"/>
    </source>
</evidence>
<evidence type="ECO:0000305" key="3"/>
<gene>
    <name type="primary">N</name>
</gene>
<feature type="chain" id="PRO_0000222815" description="Nucleoprotein">
    <location>
        <begin position="1"/>
        <end position="391"/>
    </location>
</feature>
<feature type="region of interest" description="Disordered" evidence="2">
    <location>
        <begin position="347"/>
        <end position="391"/>
    </location>
</feature>
<feature type="compositionally biased region" description="Acidic residues" evidence="2">
    <location>
        <begin position="368"/>
        <end position="391"/>
    </location>
</feature>